<comment type="function">
    <text evidence="1">Catalyzes the base-exchange of a guanine (G) residue with the queuine precursor 7-aminomethyl-7-deazaguanine (PreQ1) at position 34 (anticodon wobble position) in tRNAs with GU(N) anticodons (tRNA-Asp, -Asn, -His and -Tyr). Catalysis occurs through a double-displacement mechanism. The nucleophile active site attacks the C1' of nucleotide 34 to detach the guanine base from the RNA, forming a covalent enzyme-RNA intermediate. The proton acceptor active site deprotonates the incoming PreQ1, allowing a nucleophilic attack on the C1' of the ribose to form the product. After dissociation, two additional enzymatic reactions on the tRNA convert PreQ1 to queuine (Q), resulting in the hypermodified nucleoside queuosine (7-(((4,5-cis-dihydroxy-2-cyclopenten-1-yl)amino)methyl)-7-deazaguanosine).</text>
</comment>
<comment type="catalytic activity">
    <reaction evidence="1">
        <text>7-aminomethyl-7-carbaguanine + guanosine(34) in tRNA = 7-aminomethyl-7-carbaguanosine(34) in tRNA + guanine</text>
        <dbReference type="Rhea" id="RHEA:24104"/>
        <dbReference type="Rhea" id="RHEA-COMP:10341"/>
        <dbReference type="Rhea" id="RHEA-COMP:10342"/>
        <dbReference type="ChEBI" id="CHEBI:16235"/>
        <dbReference type="ChEBI" id="CHEBI:58703"/>
        <dbReference type="ChEBI" id="CHEBI:74269"/>
        <dbReference type="ChEBI" id="CHEBI:82833"/>
        <dbReference type="EC" id="2.4.2.29"/>
    </reaction>
</comment>
<comment type="cofactor">
    <cofactor evidence="1">
        <name>Zn(2+)</name>
        <dbReference type="ChEBI" id="CHEBI:29105"/>
    </cofactor>
    <text evidence="1">Binds 1 zinc ion per subunit.</text>
</comment>
<comment type="pathway">
    <text evidence="1">tRNA modification; tRNA-queuosine biosynthesis.</text>
</comment>
<comment type="subunit">
    <text evidence="1">Homodimer. Within each dimer, one monomer is responsible for RNA recognition and catalysis, while the other monomer binds to the replacement base PreQ1.</text>
</comment>
<comment type="similarity">
    <text evidence="1">Belongs to the queuine tRNA-ribosyltransferase family.</text>
</comment>
<organism>
    <name type="scientific">Thermosynechococcus vestitus (strain NIES-2133 / IAM M-273 / BP-1)</name>
    <dbReference type="NCBI Taxonomy" id="197221"/>
    <lineage>
        <taxon>Bacteria</taxon>
        <taxon>Bacillati</taxon>
        <taxon>Cyanobacteriota</taxon>
        <taxon>Cyanophyceae</taxon>
        <taxon>Acaryochloridales</taxon>
        <taxon>Thermosynechococcaceae</taxon>
        <taxon>Thermosynechococcus</taxon>
    </lineage>
</organism>
<protein>
    <recommendedName>
        <fullName evidence="1">Queuine tRNA-ribosyltransferase</fullName>
        <ecNumber evidence="1">2.4.2.29</ecNumber>
    </recommendedName>
    <alternativeName>
        <fullName evidence="1">Guanine insertion enzyme</fullName>
    </alternativeName>
    <alternativeName>
        <fullName evidence="1">tRNA-guanine transglycosylase</fullName>
    </alternativeName>
</protein>
<name>TGT_THEVB</name>
<sequence>MFEFVCQQECAHTQARAGLFHTPHGTVATPRFMPVGTLANVKTLTPEHLKAAGAQMILANTYHLHLQPGEDIVAAAGGLHCFMGWSGPILTDSGGFQVFSLSEMRQISDQGVVFRSPHDGQIIELSPEGAIAIQEALGADVIMAFDECPPYPASREAVIQATQRTLQWLERCIVAKQRSDQALFAIVQGGVYADLRRECAEAMVPYDLPGYAIGGVSVGEPNRIMHEIVAVTAPLLPVHKPRYLMGVGTHLEMLRAIAAGVDLFDCVIPTRLARHGCAIVQGQRWNLKNARFRRDYEPLDPTCPCYTCRTFSRAYLSHLVRAKELLAYTLLSIHNVTELIRFTQAARQAILEERFAAFAAEWEQRLVVDAEEPDAALL</sequence>
<dbReference type="EC" id="2.4.2.29" evidence="1"/>
<dbReference type="EMBL" id="BA000039">
    <property type="protein sequence ID" value="BAC07633.1"/>
    <property type="molecule type" value="Genomic_DNA"/>
</dbReference>
<dbReference type="RefSeq" id="NP_680871.1">
    <property type="nucleotide sequence ID" value="NC_004113.1"/>
</dbReference>
<dbReference type="RefSeq" id="WP_011055935.1">
    <property type="nucleotide sequence ID" value="NC_004113.1"/>
</dbReference>
<dbReference type="SMR" id="Q8CWM7"/>
<dbReference type="STRING" id="197221.gene:10746658"/>
<dbReference type="EnsemblBacteria" id="BAC07633">
    <property type="protein sequence ID" value="BAC07633"/>
    <property type="gene ID" value="BAC07633"/>
</dbReference>
<dbReference type="KEGG" id="tel:tll0080"/>
<dbReference type="PATRIC" id="fig|197221.4.peg.82"/>
<dbReference type="eggNOG" id="COG0343">
    <property type="taxonomic scope" value="Bacteria"/>
</dbReference>
<dbReference type="UniPathway" id="UPA00392"/>
<dbReference type="Proteomes" id="UP000000440">
    <property type="component" value="Chromosome"/>
</dbReference>
<dbReference type="GO" id="GO:0005829">
    <property type="term" value="C:cytosol"/>
    <property type="evidence" value="ECO:0007669"/>
    <property type="project" value="TreeGrafter"/>
</dbReference>
<dbReference type="GO" id="GO:0046872">
    <property type="term" value="F:metal ion binding"/>
    <property type="evidence" value="ECO:0007669"/>
    <property type="project" value="UniProtKB-KW"/>
</dbReference>
<dbReference type="GO" id="GO:0008479">
    <property type="term" value="F:tRNA-guanosine(34) queuine transglycosylase activity"/>
    <property type="evidence" value="ECO:0007669"/>
    <property type="project" value="UniProtKB-UniRule"/>
</dbReference>
<dbReference type="GO" id="GO:0008616">
    <property type="term" value="P:queuosine biosynthetic process"/>
    <property type="evidence" value="ECO:0007669"/>
    <property type="project" value="UniProtKB-UniRule"/>
</dbReference>
<dbReference type="GO" id="GO:0002099">
    <property type="term" value="P:tRNA wobble guanine modification"/>
    <property type="evidence" value="ECO:0007669"/>
    <property type="project" value="TreeGrafter"/>
</dbReference>
<dbReference type="GO" id="GO:0101030">
    <property type="term" value="P:tRNA-guanine transglycosylation"/>
    <property type="evidence" value="ECO:0007669"/>
    <property type="project" value="InterPro"/>
</dbReference>
<dbReference type="FunFam" id="3.20.20.105:FF:000001">
    <property type="entry name" value="Queuine tRNA-ribosyltransferase"/>
    <property type="match status" value="1"/>
</dbReference>
<dbReference type="Gene3D" id="3.20.20.105">
    <property type="entry name" value="Queuine tRNA-ribosyltransferase-like"/>
    <property type="match status" value="1"/>
</dbReference>
<dbReference type="HAMAP" id="MF_00168">
    <property type="entry name" value="Q_tRNA_Tgt"/>
    <property type="match status" value="1"/>
</dbReference>
<dbReference type="InterPro" id="IPR050076">
    <property type="entry name" value="ArchSynthase1/Queuine_TRR"/>
</dbReference>
<dbReference type="InterPro" id="IPR004803">
    <property type="entry name" value="TGT"/>
</dbReference>
<dbReference type="InterPro" id="IPR036511">
    <property type="entry name" value="TGT-like_sf"/>
</dbReference>
<dbReference type="InterPro" id="IPR002616">
    <property type="entry name" value="tRNA_ribo_trans-like"/>
</dbReference>
<dbReference type="NCBIfam" id="TIGR00430">
    <property type="entry name" value="Q_tRNA_tgt"/>
    <property type="match status" value="1"/>
</dbReference>
<dbReference type="NCBIfam" id="TIGR00449">
    <property type="entry name" value="tgt_general"/>
    <property type="match status" value="1"/>
</dbReference>
<dbReference type="PANTHER" id="PTHR46499">
    <property type="entry name" value="QUEUINE TRNA-RIBOSYLTRANSFERASE"/>
    <property type="match status" value="1"/>
</dbReference>
<dbReference type="PANTHER" id="PTHR46499:SF1">
    <property type="entry name" value="QUEUINE TRNA-RIBOSYLTRANSFERASE"/>
    <property type="match status" value="1"/>
</dbReference>
<dbReference type="Pfam" id="PF01702">
    <property type="entry name" value="TGT"/>
    <property type="match status" value="1"/>
</dbReference>
<dbReference type="SUPFAM" id="SSF51713">
    <property type="entry name" value="tRNA-guanine transglycosylase"/>
    <property type="match status" value="1"/>
</dbReference>
<reference key="1">
    <citation type="journal article" date="2002" name="DNA Res.">
        <title>Complete genome structure of the thermophilic cyanobacterium Thermosynechococcus elongatus BP-1.</title>
        <authorList>
            <person name="Nakamura Y."/>
            <person name="Kaneko T."/>
            <person name="Sato S."/>
            <person name="Ikeuchi M."/>
            <person name="Katoh H."/>
            <person name="Sasamoto S."/>
            <person name="Watanabe A."/>
            <person name="Iriguchi M."/>
            <person name="Kawashima K."/>
            <person name="Kimura T."/>
            <person name="Kishida Y."/>
            <person name="Kiyokawa C."/>
            <person name="Kohara M."/>
            <person name="Matsumoto M."/>
            <person name="Matsuno A."/>
            <person name="Nakazaki N."/>
            <person name="Shimpo S."/>
            <person name="Sugimoto M."/>
            <person name="Takeuchi C."/>
            <person name="Yamada M."/>
            <person name="Tabata S."/>
        </authorList>
    </citation>
    <scope>NUCLEOTIDE SEQUENCE [LARGE SCALE GENOMIC DNA]</scope>
    <source>
        <strain>NIES-2133 / IAM M-273 / BP-1</strain>
    </source>
</reference>
<keyword id="KW-0328">Glycosyltransferase</keyword>
<keyword id="KW-0479">Metal-binding</keyword>
<keyword id="KW-0671">Queuosine biosynthesis</keyword>
<keyword id="KW-1185">Reference proteome</keyword>
<keyword id="KW-0808">Transferase</keyword>
<keyword id="KW-0819">tRNA processing</keyword>
<keyword id="KW-0862">Zinc</keyword>
<gene>
    <name evidence="1" type="primary">tgt</name>
    <name type="ordered locus">tll0080</name>
</gene>
<proteinExistence type="inferred from homology"/>
<feature type="chain" id="PRO_0000135541" description="Queuine tRNA-ribosyltransferase">
    <location>
        <begin position="1"/>
        <end position="378"/>
    </location>
</feature>
<feature type="region of interest" description="RNA binding" evidence="1">
    <location>
        <begin position="246"/>
        <end position="252"/>
    </location>
</feature>
<feature type="region of interest" description="RNA binding; important for wobble base 34 recognition" evidence="1">
    <location>
        <begin position="270"/>
        <end position="274"/>
    </location>
</feature>
<feature type="active site" description="Proton acceptor" evidence="1">
    <location>
        <position position="92"/>
    </location>
</feature>
<feature type="active site" description="Nucleophile" evidence="1">
    <location>
        <position position="265"/>
    </location>
</feature>
<feature type="binding site" evidence="1">
    <location>
        <begin position="92"/>
        <end position="96"/>
    </location>
    <ligand>
        <name>substrate</name>
    </ligand>
</feature>
<feature type="binding site" evidence="1">
    <location>
        <position position="146"/>
    </location>
    <ligand>
        <name>substrate</name>
    </ligand>
</feature>
<feature type="binding site" evidence="1">
    <location>
        <position position="188"/>
    </location>
    <ligand>
        <name>substrate</name>
    </ligand>
</feature>
<feature type="binding site" evidence="1">
    <location>
        <position position="215"/>
    </location>
    <ligand>
        <name>substrate</name>
    </ligand>
</feature>
<feature type="binding site" evidence="1">
    <location>
        <position position="303"/>
    </location>
    <ligand>
        <name>Zn(2+)</name>
        <dbReference type="ChEBI" id="CHEBI:29105"/>
    </ligand>
</feature>
<feature type="binding site" evidence="1">
    <location>
        <position position="305"/>
    </location>
    <ligand>
        <name>Zn(2+)</name>
        <dbReference type="ChEBI" id="CHEBI:29105"/>
    </ligand>
</feature>
<feature type="binding site" evidence="1">
    <location>
        <position position="308"/>
    </location>
    <ligand>
        <name>Zn(2+)</name>
        <dbReference type="ChEBI" id="CHEBI:29105"/>
    </ligand>
</feature>
<feature type="binding site" evidence="1">
    <location>
        <position position="334"/>
    </location>
    <ligand>
        <name>Zn(2+)</name>
        <dbReference type="ChEBI" id="CHEBI:29105"/>
    </ligand>
</feature>
<evidence type="ECO:0000255" key="1">
    <source>
        <dbReference type="HAMAP-Rule" id="MF_00168"/>
    </source>
</evidence>
<accession>Q8CWM7</accession>